<keyword id="KW-0073">Auxin biosynthesis</keyword>
<keyword id="KW-0274">FAD</keyword>
<keyword id="KW-0285">Flavoprotein</keyword>
<keyword id="KW-0503">Monooxygenase</keyword>
<keyword id="KW-0521">NADP</keyword>
<keyword id="KW-0560">Oxidoreductase</keyword>
<keyword id="KW-1185">Reference proteome</keyword>
<accession>Q9SZY8</accession>
<feature type="chain" id="PRO_0000400068" description="Probable indole-3-pyruvate monooxygenase YUCCA1">
    <location>
        <begin position="1"/>
        <end position="414"/>
    </location>
</feature>
<feature type="binding site" evidence="2">
    <location>
        <begin position="25"/>
        <end position="30"/>
    </location>
    <ligand>
        <name>FAD</name>
        <dbReference type="ChEBI" id="CHEBI:57692"/>
    </ligand>
</feature>
<feature type="binding site" evidence="2">
    <location>
        <begin position="189"/>
        <end position="194"/>
    </location>
    <ligand>
        <name>NADP(+)</name>
        <dbReference type="ChEBI" id="CHEBI:58349"/>
    </ligand>
</feature>
<feature type="mutagenesis site" description="In yuc1-4; loss of activity." evidence="7">
    <original>G</original>
    <variation>E</variation>
    <location>
        <position position="25"/>
    </location>
</feature>
<feature type="mutagenesis site" description="In yuc1-5; loss of activity." evidence="7">
    <original>G</original>
    <variation>D</variation>
    <location>
        <position position="30"/>
    </location>
</feature>
<feature type="mutagenesis site" description="In yuc1-7; loss of activity." evidence="7">
    <original>S</original>
    <variation>F</variation>
    <location>
        <position position="139"/>
    </location>
</feature>
<feature type="mutagenesis site" description="In yuc1-6; loss of activity." evidence="7">
    <original>G</original>
    <variation>D</variation>
    <location>
        <position position="194"/>
    </location>
</feature>
<dbReference type="EC" id="1.14.13.168"/>
<dbReference type="EMBL" id="AY057102">
    <property type="protein sequence ID" value="AAL23750.1"/>
    <property type="molecule type" value="Genomic_DNA"/>
</dbReference>
<dbReference type="EMBL" id="AL050398">
    <property type="protein sequence ID" value="CAB43691.1"/>
    <property type="molecule type" value="Genomic_DNA"/>
</dbReference>
<dbReference type="EMBL" id="AL161581">
    <property type="protein sequence ID" value="CAB79971.1"/>
    <property type="molecule type" value="Genomic_DNA"/>
</dbReference>
<dbReference type="EMBL" id="CP002687">
    <property type="protein sequence ID" value="AEE86075.1"/>
    <property type="molecule type" value="Genomic_DNA"/>
</dbReference>
<dbReference type="PIR" id="T08587">
    <property type="entry name" value="T08587"/>
</dbReference>
<dbReference type="RefSeq" id="NP_194980.1">
    <property type="nucleotide sequence ID" value="NM_119406.3"/>
</dbReference>
<dbReference type="SMR" id="Q9SZY8"/>
<dbReference type="STRING" id="3702.Q9SZY8"/>
<dbReference type="PaxDb" id="3702-AT4G32540.1"/>
<dbReference type="EnsemblPlants" id="AT4G32540.1">
    <property type="protein sequence ID" value="AT4G32540.1"/>
    <property type="gene ID" value="AT4G32540"/>
</dbReference>
<dbReference type="GeneID" id="829389"/>
<dbReference type="Gramene" id="AT4G32540.1">
    <property type="protein sequence ID" value="AT4G32540.1"/>
    <property type="gene ID" value="AT4G32540"/>
</dbReference>
<dbReference type="KEGG" id="ath:AT4G32540"/>
<dbReference type="Araport" id="AT4G32540"/>
<dbReference type="TAIR" id="AT4G32540">
    <property type="gene designation" value="YUC1"/>
</dbReference>
<dbReference type="eggNOG" id="KOG1399">
    <property type="taxonomic scope" value="Eukaryota"/>
</dbReference>
<dbReference type="HOGENOM" id="CLU_006909_2_0_1"/>
<dbReference type="InParanoid" id="Q9SZY8"/>
<dbReference type="OMA" id="CIARDIY"/>
<dbReference type="PhylomeDB" id="Q9SZY8"/>
<dbReference type="BRENDA" id="1.14.13.168">
    <property type="organism ID" value="399"/>
</dbReference>
<dbReference type="UniPathway" id="UPA00151"/>
<dbReference type="PRO" id="PR:Q9SZY8"/>
<dbReference type="Proteomes" id="UP000006548">
    <property type="component" value="Chromosome 4"/>
</dbReference>
<dbReference type="ExpressionAtlas" id="Q9SZY8">
    <property type="expression patterns" value="baseline and differential"/>
</dbReference>
<dbReference type="GO" id="GO:0050660">
    <property type="term" value="F:flavin adenine dinucleotide binding"/>
    <property type="evidence" value="ECO:0007669"/>
    <property type="project" value="InterPro"/>
</dbReference>
<dbReference type="GO" id="GO:0103075">
    <property type="term" value="F:indole-3-pyruvate monooxygenase activity"/>
    <property type="evidence" value="ECO:0007669"/>
    <property type="project" value="UniProtKB-EC"/>
</dbReference>
<dbReference type="GO" id="GO:0004499">
    <property type="term" value="F:N,N-dimethylaniline monooxygenase activity"/>
    <property type="evidence" value="ECO:0007669"/>
    <property type="project" value="InterPro"/>
</dbReference>
<dbReference type="GO" id="GO:0050661">
    <property type="term" value="F:NADP binding"/>
    <property type="evidence" value="ECO:0007669"/>
    <property type="project" value="InterPro"/>
</dbReference>
<dbReference type="GO" id="GO:0009851">
    <property type="term" value="P:auxin biosynthetic process"/>
    <property type="evidence" value="ECO:0000315"/>
    <property type="project" value="TAIR"/>
</dbReference>
<dbReference type="FunFam" id="3.50.50.60:FF:000100">
    <property type="entry name" value="Flavin-containing monooxygenase"/>
    <property type="match status" value="1"/>
</dbReference>
<dbReference type="Gene3D" id="3.50.50.60">
    <property type="entry name" value="FAD/NAD(P)-binding domain"/>
    <property type="match status" value="1"/>
</dbReference>
<dbReference type="InterPro" id="IPR050982">
    <property type="entry name" value="Auxin_biosynth/cation_transpt"/>
</dbReference>
<dbReference type="InterPro" id="IPR036188">
    <property type="entry name" value="FAD/NAD-bd_sf"/>
</dbReference>
<dbReference type="InterPro" id="IPR020946">
    <property type="entry name" value="Flavin_mOase-like"/>
</dbReference>
<dbReference type="PANTHER" id="PTHR43539">
    <property type="entry name" value="FLAVIN-BINDING MONOOXYGENASE-LIKE PROTEIN (AFU_ORTHOLOGUE AFUA_4G09220)"/>
    <property type="match status" value="1"/>
</dbReference>
<dbReference type="PANTHER" id="PTHR43539:SF54">
    <property type="entry name" value="INDOLE-3-PYRUVATE MONOOXYGENASE YUCCA1-RELATED"/>
    <property type="match status" value="1"/>
</dbReference>
<dbReference type="Pfam" id="PF00743">
    <property type="entry name" value="FMO-like"/>
    <property type="match status" value="1"/>
</dbReference>
<dbReference type="PRINTS" id="PR00368">
    <property type="entry name" value="FADPNR"/>
</dbReference>
<dbReference type="PRINTS" id="PR00469">
    <property type="entry name" value="PNDRDTASEII"/>
</dbReference>
<dbReference type="SUPFAM" id="SSF51905">
    <property type="entry name" value="FAD/NAD(P)-binding domain"/>
    <property type="match status" value="2"/>
</dbReference>
<gene>
    <name type="primary">YUC1</name>
    <name type="synonym">YUC</name>
    <name type="synonym">YUCCA</name>
    <name type="synonym">YUCCA1</name>
    <name type="ordered locus">At4g32540</name>
    <name type="ORF">L23H3.20</name>
</gene>
<name>YUC1_ARATH</name>
<evidence type="ECO:0000250" key="1"/>
<evidence type="ECO:0000255" key="2"/>
<evidence type="ECO:0000269" key="3">
    <source>
    </source>
</evidence>
<evidence type="ECO:0000269" key="4">
    <source>
    </source>
</evidence>
<evidence type="ECO:0000269" key="5">
    <source>
    </source>
</evidence>
<evidence type="ECO:0000269" key="6">
    <source>
    </source>
</evidence>
<evidence type="ECO:0000269" key="7">
    <source>
    </source>
</evidence>
<evidence type="ECO:0000269" key="8">
    <source>
    </source>
</evidence>
<evidence type="ECO:0000269" key="9">
    <source>
    </source>
</evidence>
<evidence type="ECO:0000269" key="10">
    <source>
    </source>
</evidence>
<evidence type="ECO:0000269" key="11">
    <source>
    </source>
</evidence>
<evidence type="ECO:0000305" key="12"/>
<evidence type="ECO:0000305" key="13">
    <source>
    </source>
</evidence>
<evidence type="ECO:0000305" key="14">
    <source>
    </source>
</evidence>
<organism>
    <name type="scientific">Arabidopsis thaliana</name>
    <name type="common">Mouse-ear cress</name>
    <dbReference type="NCBI Taxonomy" id="3702"/>
    <lineage>
        <taxon>Eukaryota</taxon>
        <taxon>Viridiplantae</taxon>
        <taxon>Streptophyta</taxon>
        <taxon>Embryophyta</taxon>
        <taxon>Tracheophyta</taxon>
        <taxon>Spermatophyta</taxon>
        <taxon>Magnoliopsida</taxon>
        <taxon>eudicotyledons</taxon>
        <taxon>Gunneridae</taxon>
        <taxon>Pentapetalae</taxon>
        <taxon>rosids</taxon>
        <taxon>malvids</taxon>
        <taxon>Brassicales</taxon>
        <taxon>Brassicaceae</taxon>
        <taxon>Camelineae</taxon>
        <taxon>Arabidopsis</taxon>
    </lineage>
</organism>
<reference key="1">
    <citation type="journal article" date="2001" name="Science">
        <title>A role for flavin monooxygenase-like enzymes in auxin biosynthesis.</title>
        <authorList>
            <person name="Zhao Y."/>
            <person name="Christensen S.K."/>
            <person name="Fankhauser C."/>
            <person name="Cashman J.R."/>
            <person name="Cohen J.D."/>
            <person name="Weigel D."/>
            <person name="Chory J."/>
        </authorList>
    </citation>
    <scope>NUCLEOTIDE SEQUENCE [GENOMIC DNA]</scope>
    <scope>FUNCTION</scope>
</reference>
<reference key="2">
    <citation type="journal article" date="1999" name="Nature">
        <title>Sequence and analysis of chromosome 4 of the plant Arabidopsis thaliana.</title>
        <authorList>
            <person name="Mayer K.F.X."/>
            <person name="Schueller C."/>
            <person name="Wambutt R."/>
            <person name="Murphy G."/>
            <person name="Volckaert G."/>
            <person name="Pohl T."/>
            <person name="Duesterhoeft A."/>
            <person name="Stiekema W."/>
            <person name="Entian K.-D."/>
            <person name="Terryn N."/>
            <person name="Harris B."/>
            <person name="Ansorge W."/>
            <person name="Brandt P."/>
            <person name="Grivell L.A."/>
            <person name="Rieger M."/>
            <person name="Weichselgartner M."/>
            <person name="de Simone V."/>
            <person name="Obermaier B."/>
            <person name="Mache R."/>
            <person name="Mueller M."/>
            <person name="Kreis M."/>
            <person name="Delseny M."/>
            <person name="Puigdomenech P."/>
            <person name="Watson M."/>
            <person name="Schmidtheini T."/>
            <person name="Reichert B."/>
            <person name="Portetelle D."/>
            <person name="Perez-Alonso M."/>
            <person name="Boutry M."/>
            <person name="Bancroft I."/>
            <person name="Vos P."/>
            <person name="Hoheisel J."/>
            <person name="Zimmermann W."/>
            <person name="Wedler H."/>
            <person name="Ridley P."/>
            <person name="Langham S.-A."/>
            <person name="McCullagh B."/>
            <person name="Bilham L."/>
            <person name="Robben J."/>
            <person name="van der Schueren J."/>
            <person name="Grymonprez B."/>
            <person name="Chuang Y.-J."/>
            <person name="Vandenbussche F."/>
            <person name="Braeken M."/>
            <person name="Weltjens I."/>
            <person name="Voet M."/>
            <person name="Bastiaens I."/>
            <person name="Aert R."/>
            <person name="Defoor E."/>
            <person name="Weitzenegger T."/>
            <person name="Bothe G."/>
            <person name="Ramsperger U."/>
            <person name="Hilbert H."/>
            <person name="Braun M."/>
            <person name="Holzer E."/>
            <person name="Brandt A."/>
            <person name="Peters S."/>
            <person name="van Staveren M."/>
            <person name="Dirkse W."/>
            <person name="Mooijman P."/>
            <person name="Klein Lankhorst R."/>
            <person name="Rose M."/>
            <person name="Hauf J."/>
            <person name="Koetter P."/>
            <person name="Berneiser S."/>
            <person name="Hempel S."/>
            <person name="Feldpausch M."/>
            <person name="Lamberth S."/>
            <person name="Van den Daele H."/>
            <person name="De Keyser A."/>
            <person name="Buysshaert C."/>
            <person name="Gielen J."/>
            <person name="Villarroel R."/>
            <person name="De Clercq R."/>
            <person name="van Montagu M."/>
            <person name="Rogers J."/>
            <person name="Cronin A."/>
            <person name="Quail M.A."/>
            <person name="Bray-Allen S."/>
            <person name="Clark L."/>
            <person name="Doggett J."/>
            <person name="Hall S."/>
            <person name="Kay M."/>
            <person name="Lennard N."/>
            <person name="McLay K."/>
            <person name="Mayes R."/>
            <person name="Pettett A."/>
            <person name="Rajandream M.A."/>
            <person name="Lyne M."/>
            <person name="Benes V."/>
            <person name="Rechmann S."/>
            <person name="Borkova D."/>
            <person name="Bloecker H."/>
            <person name="Scharfe M."/>
            <person name="Grimm M."/>
            <person name="Loehnert T.-H."/>
            <person name="Dose S."/>
            <person name="de Haan M."/>
            <person name="Maarse A.C."/>
            <person name="Schaefer M."/>
            <person name="Mueller-Auer S."/>
            <person name="Gabel C."/>
            <person name="Fuchs M."/>
            <person name="Fartmann B."/>
            <person name="Granderath K."/>
            <person name="Dauner D."/>
            <person name="Herzl A."/>
            <person name="Neumann S."/>
            <person name="Argiriou A."/>
            <person name="Vitale D."/>
            <person name="Liguori R."/>
            <person name="Piravandi E."/>
            <person name="Massenet O."/>
            <person name="Quigley F."/>
            <person name="Clabauld G."/>
            <person name="Muendlein A."/>
            <person name="Felber R."/>
            <person name="Schnabl S."/>
            <person name="Hiller R."/>
            <person name="Schmidt W."/>
            <person name="Lecharny A."/>
            <person name="Aubourg S."/>
            <person name="Chefdor F."/>
            <person name="Cooke R."/>
            <person name="Berger C."/>
            <person name="Monfort A."/>
            <person name="Casacuberta E."/>
            <person name="Gibbons T."/>
            <person name="Weber N."/>
            <person name="Vandenbol M."/>
            <person name="Bargues M."/>
            <person name="Terol J."/>
            <person name="Torres A."/>
            <person name="Perez-Perez A."/>
            <person name="Purnelle B."/>
            <person name="Bent E."/>
            <person name="Johnson S."/>
            <person name="Tacon D."/>
            <person name="Jesse T."/>
            <person name="Heijnen L."/>
            <person name="Schwarz S."/>
            <person name="Scholler P."/>
            <person name="Heber S."/>
            <person name="Francs P."/>
            <person name="Bielke C."/>
            <person name="Frishman D."/>
            <person name="Haase D."/>
            <person name="Lemcke K."/>
            <person name="Mewes H.-W."/>
            <person name="Stocker S."/>
            <person name="Zaccaria P."/>
            <person name="Bevan M."/>
            <person name="Wilson R.K."/>
            <person name="de la Bastide M."/>
            <person name="Habermann K."/>
            <person name="Parnell L."/>
            <person name="Dedhia N."/>
            <person name="Gnoj L."/>
            <person name="Schutz K."/>
            <person name="Huang E."/>
            <person name="Spiegel L."/>
            <person name="Sekhon M."/>
            <person name="Murray J."/>
            <person name="Sheet P."/>
            <person name="Cordes M."/>
            <person name="Abu-Threideh J."/>
            <person name="Stoneking T."/>
            <person name="Kalicki J."/>
            <person name="Graves T."/>
            <person name="Harmon G."/>
            <person name="Edwards J."/>
            <person name="Latreille P."/>
            <person name="Courtney L."/>
            <person name="Cloud J."/>
            <person name="Abbott A."/>
            <person name="Scott K."/>
            <person name="Johnson D."/>
            <person name="Minx P."/>
            <person name="Bentley D."/>
            <person name="Fulton B."/>
            <person name="Miller N."/>
            <person name="Greco T."/>
            <person name="Kemp K."/>
            <person name="Kramer J."/>
            <person name="Fulton L."/>
            <person name="Mardis E."/>
            <person name="Dante M."/>
            <person name="Pepin K."/>
            <person name="Hillier L.W."/>
            <person name="Nelson J."/>
            <person name="Spieth J."/>
            <person name="Ryan E."/>
            <person name="Andrews S."/>
            <person name="Geisel C."/>
            <person name="Layman D."/>
            <person name="Du H."/>
            <person name="Ali J."/>
            <person name="Berghoff A."/>
            <person name="Jones K."/>
            <person name="Drone K."/>
            <person name="Cotton M."/>
            <person name="Joshu C."/>
            <person name="Antonoiu B."/>
            <person name="Zidanic M."/>
            <person name="Strong C."/>
            <person name="Sun H."/>
            <person name="Lamar B."/>
            <person name="Yordan C."/>
            <person name="Ma P."/>
            <person name="Zhong J."/>
            <person name="Preston R."/>
            <person name="Vil D."/>
            <person name="Shekher M."/>
            <person name="Matero A."/>
            <person name="Shah R."/>
            <person name="Swaby I.K."/>
            <person name="O'Shaughnessy A."/>
            <person name="Rodriguez M."/>
            <person name="Hoffman J."/>
            <person name="Till S."/>
            <person name="Granat S."/>
            <person name="Shohdy N."/>
            <person name="Hasegawa A."/>
            <person name="Hameed A."/>
            <person name="Lodhi M."/>
            <person name="Johnson A."/>
            <person name="Chen E."/>
            <person name="Marra M.A."/>
            <person name="Martienssen R."/>
            <person name="McCombie W.R."/>
        </authorList>
    </citation>
    <scope>NUCLEOTIDE SEQUENCE [LARGE SCALE GENOMIC DNA]</scope>
    <source>
        <strain>cv. Columbia</strain>
    </source>
</reference>
<reference key="3">
    <citation type="journal article" date="2017" name="Plant J.">
        <title>Araport11: a complete reannotation of the Arabidopsis thaliana reference genome.</title>
        <authorList>
            <person name="Cheng C.Y."/>
            <person name="Krishnakumar V."/>
            <person name="Chan A.P."/>
            <person name="Thibaud-Nissen F."/>
            <person name="Schobel S."/>
            <person name="Town C.D."/>
        </authorList>
    </citation>
    <scope>GENOME REANNOTATION</scope>
    <source>
        <strain>cv. Columbia</strain>
    </source>
</reference>
<reference key="4">
    <citation type="journal article" date="2006" name="Genes Dev.">
        <title>Auxin biosynthesis by the YUCCA flavin monooxygenases controls the formation of floral organs and vascular tissues in Arabidopsis.</title>
        <authorList>
            <person name="Cheng Y."/>
            <person name="Dai X."/>
            <person name="Zhao Y."/>
        </authorList>
    </citation>
    <scope>GENE FAMILY</scope>
    <scope>NOMENCLATURE</scope>
    <scope>FUNCTION</scope>
    <scope>DISRUPTION PHENOTYPE</scope>
    <scope>TISSUE SPECIFICITY</scope>
</reference>
<reference key="5">
    <citation type="journal article" date="2007" name="Plant Cell">
        <title>Auxin synthesized by the YUCCA flavin monooxygenases is essential for embryogenesis and leaf formation in Arabidopsis.</title>
        <authorList>
            <person name="Cheng Y."/>
            <person name="Dai X."/>
            <person name="Zhao Y."/>
        </authorList>
    </citation>
    <scope>FUNCTION</scope>
    <scope>DEVELOPMENTAL STAGE</scope>
</reference>
<reference key="6">
    <citation type="journal article" date="2007" name="Plant J.">
        <title>Identification of a flavin-monooxygenase as the S-oxygenating enzyme in aliphatic glucosinolate biosynthesis in Arabidopsis.</title>
        <authorList>
            <person name="Hansen B.G."/>
            <person name="Kliebenstein D.J."/>
            <person name="Halkier B.A."/>
        </authorList>
    </citation>
    <scope>GENE FAMILY</scope>
    <source>
        <strain>cv. Columbia</strain>
    </source>
</reference>
<reference key="7">
    <citation type="journal article" date="2010" name="Plant Physiol.">
        <title>Reassessing the role of N-hydroxytryptamine in auxin biosynthesis.</title>
        <authorList>
            <person name="Tivendale N.D."/>
            <person name="Davies N.W."/>
            <person name="Molesworth P.P."/>
            <person name="Davidson S.E."/>
            <person name="Smith J.A."/>
            <person name="Lowe E.K."/>
            <person name="Reid J.B."/>
            <person name="Ross J.J."/>
        </authorList>
    </citation>
    <scope>FUNCTION</scope>
</reference>
<reference key="8">
    <citation type="journal article" date="2011" name="J. Integr. Plant Biol.">
        <title>Allelic analyses of the Arabidopsis YUC1 locus reveal residues and domains essential for the functions of YUC family of flavin monooxygenases.</title>
        <authorList>
            <person name="Hou X."/>
            <person name="Liu S."/>
            <person name="Pierri F."/>
            <person name="Dai X."/>
            <person name="Qu L.J."/>
            <person name="Zhao Y."/>
        </authorList>
    </citation>
    <scope>FUNCTION</scope>
    <scope>MUTAGENESIS OF GLY-25; GLY-30; SER-139 AND GLY-194</scope>
    <scope>DISRUPTION PHENOTYPE</scope>
</reference>
<reference key="9">
    <citation type="journal article" date="2011" name="Plant Cell">
        <title>The Arabidopsis YUCCA1 flavin monooxygenase functions in the indole-3-pyruvic acid branch of auxin biosynthesis.</title>
        <authorList>
            <person name="Stepanova A.N."/>
            <person name="Yun J."/>
            <person name="Robles L.M."/>
            <person name="Novak O."/>
            <person name="He W."/>
            <person name="Guo H."/>
            <person name="Ljung K."/>
            <person name="Alonso J.M."/>
        </authorList>
    </citation>
    <scope>FUNCTION</scope>
</reference>
<reference key="10">
    <citation type="journal article" date="2011" name="Plant Signal. Behav.">
        <title>Reassessing the role of YUCCAs in auxin biosynthesis.</title>
        <authorList>
            <person name="Ross J.J."/>
            <person name="Tivendale N.D."/>
            <person name="Reid J.B."/>
            <person name="Davies N.W."/>
            <person name="Molesworth P.P."/>
            <person name="Lowe E.K."/>
            <person name="Smith J.A."/>
            <person name="Davidson S.E."/>
        </authorList>
    </citation>
    <scope>FUNCTION</scope>
</reference>
<reference key="11">
    <citation type="journal article" date="2011" name="Proc. Natl. Acad. Sci. U.S.A.">
        <title>The main auxin biosynthesis pathway in Arabidopsis.</title>
        <authorList>
            <person name="Mashiguchi K."/>
            <person name="Tanaka K."/>
            <person name="Sakai T."/>
            <person name="Sugawara S."/>
            <person name="Kawaide H."/>
            <person name="Natsume M."/>
            <person name="Hanada A."/>
            <person name="Yaeno T."/>
            <person name="Shirasu K."/>
            <person name="Yao H."/>
            <person name="McSteen P."/>
            <person name="Zhao Y."/>
            <person name="Hayashi K."/>
            <person name="Kamiya Y."/>
            <person name="Kasahara H."/>
        </authorList>
    </citation>
    <scope>FUNCTION</scope>
</reference>
<reference key="12">
    <citation type="journal article" date="2011" name="Proc. Natl. Acad. Sci. U.S.A.">
        <title>Conversion of tryptophan to indole-3-acetic acid by TRYPTOPHAN AMINOTRANSFERASES OF ARABIDOPSIS and YUCCAs in Arabidopsis.</title>
        <authorList>
            <person name="Won C."/>
            <person name="Shen X."/>
            <person name="Mashiguchi K."/>
            <person name="Zheng Z."/>
            <person name="Dai X."/>
            <person name="Cheng Y."/>
            <person name="Kasahara H."/>
            <person name="Kamiya Y."/>
            <person name="Chory J."/>
            <person name="Zhao Y."/>
        </authorList>
    </citation>
    <scope>FUNCTION</scope>
</reference>
<protein>
    <recommendedName>
        <fullName>Probable indole-3-pyruvate monooxygenase YUCCA1</fullName>
        <ecNumber>1.14.13.168</ecNumber>
    </recommendedName>
    <alternativeName>
        <fullName>Flavin-containing monooxygenase YUCCA1</fullName>
    </alternativeName>
</protein>
<sequence>MESHPHNKTDQTQHIILVHGPIIIGAGPSGLATSACLSSRGVPSLILERSDSIASLWKSKTYDRLRLHLPKHFCRLPLLDFPEYYPKYPSKNEFLAYLESYASHFRIAPRFNKNVQNAAYDSSSGFWRVKTHDNTEYLSKWLIVATGENADPYFPEIPGRKKFSGGKIVHASEYKSGEEFRRQKVLVVGCGNSGMEISLDLVRHNASPHLVVRNTVHVLPREILGVSTFGVGMTLLKCLPLRLVDKFLLLMANLSFGNTDRLGLRRPKTGPLELKNVTGKSPVLDVGAMSLIRSGMIQIMEGVKEITKKGAKFMDGQEKDFDSIIFATGYKSNVPTWLQGGDFFTDDGMPKTPFPNGWRGGKGLYTVGFTRRGLLGTASDAVKIAGEIGDQWRDEIKGSTRNMCSSRFVFTSKS</sequence>
<proteinExistence type="evidence at protein level"/>
<comment type="function">
    <text evidence="3 4 5 6 7 8 9 10 11">Involved in auxin biosynthesis, but not in the tryptamine or the CYP79B2/B3 branches. Catalyzes in vitro the N-oxidation of tryptamine to form N-hydroxyl tryptamine. Involved during embryogenesis and seedling development. Required for the formation of floral organs and vascular tissues. Belongs to the set of redundant YUCCA genes probably responsible for auxin biosynthesis in shoots.</text>
</comment>
<comment type="catalytic activity">
    <reaction>
        <text>indole-3-pyruvate + NADPH + O2 + H(+) = (indol-3-yl)acetate + CO2 + NADP(+) + H2O</text>
        <dbReference type="Rhea" id="RHEA:34331"/>
        <dbReference type="ChEBI" id="CHEBI:15377"/>
        <dbReference type="ChEBI" id="CHEBI:15378"/>
        <dbReference type="ChEBI" id="CHEBI:15379"/>
        <dbReference type="ChEBI" id="CHEBI:16526"/>
        <dbReference type="ChEBI" id="CHEBI:17640"/>
        <dbReference type="ChEBI" id="CHEBI:30854"/>
        <dbReference type="ChEBI" id="CHEBI:57783"/>
        <dbReference type="ChEBI" id="CHEBI:58349"/>
        <dbReference type="EC" id="1.14.13.168"/>
    </reaction>
</comment>
<comment type="cofactor">
    <cofactor evidence="1">
        <name>FAD</name>
        <dbReference type="ChEBI" id="CHEBI:57692"/>
    </cofactor>
</comment>
<comment type="pathway">
    <text>Plant hormone metabolism; auxin biosynthesis.</text>
</comment>
<comment type="tissue specificity">
    <text evidence="4">Expressed in the apical meristems and young floral primordia. Detected in the floral meristems and at the base of the floral organs.</text>
</comment>
<comment type="developmental stage">
    <text evidence="5">Expression relatively broad during early stages of embryogenesis and more restricted to discrete groups of cells in mature embryos. Later, expression mainly restricted to the cotyledons and the apical meristem.</text>
</comment>
<comment type="disruption phenotype">
    <text evidence="4 7">No visible phenotype, due to the redundancy with the other members of the YUCCA family.</text>
</comment>
<comment type="similarity">
    <text evidence="12">Belongs to the FMO family.</text>
</comment>
<comment type="caution">
    <text evidence="13 14">Was initially (PubMed:11209081) thought to be involved in the tryptamine pathway for the biosynthesis of indole-3-acetic acid (IAA), but it has been shown (PubMed:20974893) that this is not the case. It is now admitted (PubMed:22025724, PubMed:22108406) that the YUCCA family is implicated in the conversion of indole-3-pyruvic acid (IPA) to indole-3-acetic acid (IAA).</text>
</comment>